<gene>
    <name evidence="1" type="primary">rpsU</name>
    <name type="ordered locus">SeAg_B3395</name>
</gene>
<reference key="1">
    <citation type="journal article" date="2011" name="J. Bacteriol.">
        <title>Comparative genomics of 28 Salmonella enterica isolates: evidence for CRISPR-mediated adaptive sublineage evolution.</title>
        <authorList>
            <person name="Fricke W.F."/>
            <person name="Mammel M.K."/>
            <person name="McDermott P.F."/>
            <person name="Tartera C."/>
            <person name="White D.G."/>
            <person name="Leclerc J.E."/>
            <person name="Ravel J."/>
            <person name="Cebula T.A."/>
        </authorList>
    </citation>
    <scope>NUCLEOTIDE SEQUENCE [LARGE SCALE GENOMIC DNA]</scope>
    <source>
        <strain>SL483</strain>
    </source>
</reference>
<name>RS21_SALA4</name>
<feature type="chain" id="PRO_1000120654" description="Small ribosomal subunit protein bS21">
    <location>
        <begin position="1"/>
        <end position="71"/>
    </location>
</feature>
<feature type="region of interest" description="Disordered" evidence="2">
    <location>
        <begin position="43"/>
        <end position="71"/>
    </location>
</feature>
<feature type="compositionally biased region" description="Basic residues" evidence="2">
    <location>
        <begin position="46"/>
        <end position="59"/>
    </location>
</feature>
<feature type="compositionally biased region" description="Basic and acidic residues" evidence="2">
    <location>
        <begin position="60"/>
        <end position="71"/>
    </location>
</feature>
<dbReference type="EMBL" id="CP001138">
    <property type="protein sequence ID" value="ACH51964.1"/>
    <property type="molecule type" value="Genomic_DNA"/>
</dbReference>
<dbReference type="RefSeq" id="WP_001144069.1">
    <property type="nucleotide sequence ID" value="NC_011149.1"/>
</dbReference>
<dbReference type="SMR" id="B5F6A5"/>
<dbReference type="GeneID" id="98390195"/>
<dbReference type="KEGG" id="sea:SeAg_B3395"/>
<dbReference type="HOGENOM" id="CLU_159258_1_0_6"/>
<dbReference type="Proteomes" id="UP000008819">
    <property type="component" value="Chromosome"/>
</dbReference>
<dbReference type="GO" id="GO:1990904">
    <property type="term" value="C:ribonucleoprotein complex"/>
    <property type="evidence" value="ECO:0007669"/>
    <property type="project" value="UniProtKB-KW"/>
</dbReference>
<dbReference type="GO" id="GO:0005840">
    <property type="term" value="C:ribosome"/>
    <property type="evidence" value="ECO:0007669"/>
    <property type="project" value="UniProtKB-KW"/>
</dbReference>
<dbReference type="GO" id="GO:0003735">
    <property type="term" value="F:structural constituent of ribosome"/>
    <property type="evidence" value="ECO:0007669"/>
    <property type="project" value="InterPro"/>
</dbReference>
<dbReference type="GO" id="GO:0006412">
    <property type="term" value="P:translation"/>
    <property type="evidence" value="ECO:0007669"/>
    <property type="project" value="UniProtKB-UniRule"/>
</dbReference>
<dbReference type="FunFam" id="1.20.5.1150:FF:000001">
    <property type="entry name" value="30S ribosomal protein S21"/>
    <property type="match status" value="1"/>
</dbReference>
<dbReference type="Gene3D" id="1.20.5.1150">
    <property type="entry name" value="Ribosomal protein S8"/>
    <property type="match status" value="1"/>
</dbReference>
<dbReference type="HAMAP" id="MF_00358">
    <property type="entry name" value="Ribosomal_bS21"/>
    <property type="match status" value="1"/>
</dbReference>
<dbReference type="InterPro" id="IPR001911">
    <property type="entry name" value="Ribosomal_bS21"/>
</dbReference>
<dbReference type="InterPro" id="IPR018278">
    <property type="entry name" value="Ribosomal_bS21_CS"/>
</dbReference>
<dbReference type="InterPro" id="IPR038380">
    <property type="entry name" value="Ribosomal_bS21_sf"/>
</dbReference>
<dbReference type="NCBIfam" id="TIGR00030">
    <property type="entry name" value="S21p"/>
    <property type="match status" value="1"/>
</dbReference>
<dbReference type="PANTHER" id="PTHR21109">
    <property type="entry name" value="MITOCHONDRIAL 28S RIBOSOMAL PROTEIN S21"/>
    <property type="match status" value="1"/>
</dbReference>
<dbReference type="PANTHER" id="PTHR21109:SF22">
    <property type="entry name" value="SMALL RIBOSOMAL SUBUNIT PROTEIN BS21"/>
    <property type="match status" value="1"/>
</dbReference>
<dbReference type="Pfam" id="PF01165">
    <property type="entry name" value="Ribosomal_S21"/>
    <property type="match status" value="1"/>
</dbReference>
<dbReference type="PRINTS" id="PR00976">
    <property type="entry name" value="RIBOSOMALS21"/>
</dbReference>
<dbReference type="PROSITE" id="PS01181">
    <property type="entry name" value="RIBOSOMAL_S21"/>
    <property type="match status" value="1"/>
</dbReference>
<sequence>MPVIKVRENEPFDVALRRFKRSCEKAGVLAEVRRREFYEKPTTERKRAKASAVKRHAKKLARENARRTRLY</sequence>
<keyword id="KW-0687">Ribonucleoprotein</keyword>
<keyword id="KW-0689">Ribosomal protein</keyword>
<evidence type="ECO:0000255" key="1">
    <source>
        <dbReference type="HAMAP-Rule" id="MF_00358"/>
    </source>
</evidence>
<evidence type="ECO:0000256" key="2">
    <source>
        <dbReference type="SAM" id="MobiDB-lite"/>
    </source>
</evidence>
<evidence type="ECO:0000305" key="3"/>
<accession>B5F6A5</accession>
<protein>
    <recommendedName>
        <fullName evidence="1">Small ribosomal subunit protein bS21</fullName>
    </recommendedName>
    <alternativeName>
        <fullName evidence="3">30S ribosomal protein S21</fullName>
    </alternativeName>
</protein>
<proteinExistence type="inferred from homology"/>
<comment type="similarity">
    <text evidence="1">Belongs to the bacterial ribosomal protein bS21 family.</text>
</comment>
<organism>
    <name type="scientific">Salmonella agona (strain SL483)</name>
    <dbReference type="NCBI Taxonomy" id="454166"/>
    <lineage>
        <taxon>Bacteria</taxon>
        <taxon>Pseudomonadati</taxon>
        <taxon>Pseudomonadota</taxon>
        <taxon>Gammaproteobacteria</taxon>
        <taxon>Enterobacterales</taxon>
        <taxon>Enterobacteriaceae</taxon>
        <taxon>Salmonella</taxon>
    </lineage>
</organism>